<gene>
    <name evidence="1" type="primary">rsmH</name>
    <name type="synonym">mraW</name>
    <name type="ordered locus">DICTH_1140</name>
</gene>
<sequence length="297" mass="34148">MEEVESIHKPVMLKEVIHYLNLSPGKIVVDATLGLGGHSSEILRELRGEGLLIGIDRDEEVLKLARERLSKIAGNFVLFNTTYDNLQNILKELNLSFIDAILFDLGFSSFHIEKSGRGFSFMRPEEPLDMRYSKDTALTAADILNTFSESELSNLFWEYGEEPLSKKLAKKIVERRKDKKFAYVGDLLEVIDEVIPRRRRHEATKVFQALRIAVNDELNIFKRALEQVPFILSIGGRIVVITYHSLEDRIVKNFFKSYSDKILPVSKKVIKPSIEEIKENRRARSAKLRVGERRENS</sequence>
<feature type="chain" id="PRO_0000386859" description="Ribosomal RNA small subunit methyltransferase H">
    <location>
        <begin position="1"/>
        <end position="297"/>
    </location>
</feature>
<feature type="binding site" evidence="1">
    <location>
        <begin position="36"/>
        <end position="38"/>
    </location>
    <ligand>
        <name>S-adenosyl-L-methionine</name>
        <dbReference type="ChEBI" id="CHEBI:59789"/>
    </ligand>
</feature>
<feature type="binding site" evidence="1">
    <location>
        <position position="56"/>
    </location>
    <ligand>
        <name>S-adenosyl-L-methionine</name>
        <dbReference type="ChEBI" id="CHEBI:59789"/>
    </ligand>
</feature>
<feature type="binding site" evidence="1">
    <location>
        <position position="90"/>
    </location>
    <ligand>
        <name>S-adenosyl-L-methionine</name>
        <dbReference type="ChEBI" id="CHEBI:59789"/>
    </ligand>
</feature>
<feature type="binding site" evidence="1">
    <location>
        <position position="104"/>
    </location>
    <ligand>
        <name>S-adenosyl-L-methionine</name>
        <dbReference type="ChEBI" id="CHEBI:59789"/>
    </ligand>
</feature>
<feature type="binding site" evidence="1">
    <location>
        <position position="111"/>
    </location>
    <ligand>
        <name>S-adenosyl-L-methionine</name>
        <dbReference type="ChEBI" id="CHEBI:59789"/>
    </ligand>
</feature>
<accession>B5YEM1</accession>
<keyword id="KW-0963">Cytoplasm</keyword>
<keyword id="KW-0489">Methyltransferase</keyword>
<keyword id="KW-0698">rRNA processing</keyword>
<keyword id="KW-0949">S-adenosyl-L-methionine</keyword>
<keyword id="KW-0808">Transferase</keyword>
<organism>
    <name type="scientific">Dictyoglomus thermophilum (strain ATCC 35947 / DSM 3960 / H-6-12)</name>
    <dbReference type="NCBI Taxonomy" id="309799"/>
    <lineage>
        <taxon>Bacteria</taxon>
        <taxon>Pseudomonadati</taxon>
        <taxon>Dictyoglomota</taxon>
        <taxon>Dictyoglomia</taxon>
        <taxon>Dictyoglomales</taxon>
        <taxon>Dictyoglomaceae</taxon>
        <taxon>Dictyoglomus</taxon>
    </lineage>
</organism>
<name>RSMH_DICT6</name>
<proteinExistence type="inferred from homology"/>
<evidence type="ECO:0000255" key="1">
    <source>
        <dbReference type="HAMAP-Rule" id="MF_01007"/>
    </source>
</evidence>
<reference key="1">
    <citation type="journal article" date="2014" name="Genome Announc.">
        <title>Complete Genome Sequence of the Extreme Thermophile Dictyoglomus thermophilum H-6-12.</title>
        <authorList>
            <person name="Coil D.A."/>
            <person name="Badger J.H."/>
            <person name="Forberger H.C."/>
            <person name="Riggs F."/>
            <person name="Madupu R."/>
            <person name="Fedorova N."/>
            <person name="Ward N."/>
            <person name="Robb F.T."/>
            <person name="Eisen J.A."/>
        </authorList>
    </citation>
    <scope>NUCLEOTIDE SEQUENCE [LARGE SCALE GENOMIC DNA]</scope>
    <source>
        <strain>ATCC 35947 / DSM 3960 / H-6-12</strain>
    </source>
</reference>
<dbReference type="EC" id="2.1.1.199" evidence="1"/>
<dbReference type="EMBL" id="CP001146">
    <property type="protein sequence ID" value="ACI20018.1"/>
    <property type="molecule type" value="Genomic_DNA"/>
</dbReference>
<dbReference type="RefSeq" id="WP_012548650.1">
    <property type="nucleotide sequence ID" value="NC_011297.1"/>
</dbReference>
<dbReference type="SMR" id="B5YEM1"/>
<dbReference type="STRING" id="309799.DICTH_1140"/>
<dbReference type="PaxDb" id="309799-DICTH_1140"/>
<dbReference type="KEGG" id="dth:DICTH_1140"/>
<dbReference type="eggNOG" id="COG0275">
    <property type="taxonomic scope" value="Bacteria"/>
</dbReference>
<dbReference type="HOGENOM" id="CLU_038422_3_0_0"/>
<dbReference type="OrthoDB" id="9806637at2"/>
<dbReference type="Proteomes" id="UP000001733">
    <property type="component" value="Chromosome"/>
</dbReference>
<dbReference type="GO" id="GO:0005737">
    <property type="term" value="C:cytoplasm"/>
    <property type="evidence" value="ECO:0007669"/>
    <property type="project" value="UniProtKB-SubCell"/>
</dbReference>
<dbReference type="GO" id="GO:0071424">
    <property type="term" value="F:rRNA (cytosine-N4-)-methyltransferase activity"/>
    <property type="evidence" value="ECO:0007669"/>
    <property type="project" value="UniProtKB-UniRule"/>
</dbReference>
<dbReference type="GO" id="GO:0070475">
    <property type="term" value="P:rRNA base methylation"/>
    <property type="evidence" value="ECO:0007669"/>
    <property type="project" value="UniProtKB-UniRule"/>
</dbReference>
<dbReference type="Gene3D" id="1.10.150.170">
    <property type="entry name" value="Putative methyltransferase TM0872, insert domain"/>
    <property type="match status" value="1"/>
</dbReference>
<dbReference type="Gene3D" id="3.40.50.150">
    <property type="entry name" value="Vaccinia Virus protein VP39"/>
    <property type="match status" value="1"/>
</dbReference>
<dbReference type="HAMAP" id="MF_01007">
    <property type="entry name" value="16SrRNA_methyltr_H"/>
    <property type="match status" value="1"/>
</dbReference>
<dbReference type="InterPro" id="IPR002903">
    <property type="entry name" value="RsmH"/>
</dbReference>
<dbReference type="InterPro" id="IPR023397">
    <property type="entry name" value="SAM-dep_MeTrfase_MraW_recog"/>
</dbReference>
<dbReference type="InterPro" id="IPR029063">
    <property type="entry name" value="SAM-dependent_MTases_sf"/>
</dbReference>
<dbReference type="NCBIfam" id="TIGR00006">
    <property type="entry name" value="16S rRNA (cytosine(1402)-N(4))-methyltransferase RsmH"/>
    <property type="match status" value="1"/>
</dbReference>
<dbReference type="PANTHER" id="PTHR11265:SF0">
    <property type="entry name" value="12S RRNA N4-METHYLCYTIDINE METHYLTRANSFERASE"/>
    <property type="match status" value="1"/>
</dbReference>
<dbReference type="PANTHER" id="PTHR11265">
    <property type="entry name" value="S-ADENOSYL-METHYLTRANSFERASE MRAW"/>
    <property type="match status" value="1"/>
</dbReference>
<dbReference type="Pfam" id="PF01795">
    <property type="entry name" value="Methyltransf_5"/>
    <property type="match status" value="1"/>
</dbReference>
<dbReference type="PIRSF" id="PIRSF004486">
    <property type="entry name" value="MraW"/>
    <property type="match status" value="1"/>
</dbReference>
<dbReference type="SUPFAM" id="SSF81799">
    <property type="entry name" value="Putative methyltransferase TM0872, insert domain"/>
    <property type="match status" value="1"/>
</dbReference>
<dbReference type="SUPFAM" id="SSF53335">
    <property type="entry name" value="S-adenosyl-L-methionine-dependent methyltransferases"/>
    <property type="match status" value="1"/>
</dbReference>
<protein>
    <recommendedName>
        <fullName evidence="1">Ribosomal RNA small subunit methyltransferase H</fullName>
        <ecNumber evidence="1">2.1.1.199</ecNumber>
    </recommendedName>
    <alternativeName>
        <fullName evidence="1">16S rRNA m(4)C1402 methyltransferase</fullName>
    </alternativeName>
    <alternativeName>
        <fullName evidence="1">rRNA (cytosine-N(4)-)-methyltransferase RsmH</fullName>
    </alternativeName>
</protein>
<comment type="function">
    <text evidence="1">Specifically methylates the N4 position of cytidine in position 1402 (C1402) of 16S rRNA.</text>
</comment>
<comment type="catalytic activity">
    <reaction evidence="1">
        <text>cytidine(1402) in 16S rRNA + S-adenosyl-L-methionine = N(4)-methylcytidine(1402) in 16S rRNA + S-adenosyl-L-homocysteine + H(+)</text>
        <dbReference type="Rhea" id="RHEA:42928"/>
        <dbReference type="Rhea" id="RHEA-COMP:10286"/>
        <dbReference type="Rhea" id="RHEA-COMP:10287"/>
        <dbReference type="ChEBI" id="CHEBI:15378"/>
        <dbReference type="ChEBI" id="CHEBI:57856"/>
        <dbReference type="ChEBI" id="CHEBI:59789"/>
        <dbReference type="ChEBI" id="CHEBI:74506"/>
        <dbReference type="ChEBI" id="CHEBI:82748"/>
        <dbReference type="EC" id="2.1.1.199"/>
    </reaction>
</comment>
<comment type="subcellular location">
    <subcellularLocation>
        <location evidence="1">Cytoplasm</location>
    </subcellularLocation>
</comment>
<comment type="similarity">
    <text evidence="1">Belongs to the methyltransferase superfamily. RsmH family.</text>
</comment>